<dbReference type="EC" id="2.4.2.18" evidence="1"/>
<dbReference type="EMBL" id="CP000521">
    <property type="protein sequence ID" value="ABO12778.2"/>
    <property type="molecule type" value="Genomic_DNA"/>
</dbReference>
<dbReference type="RefSeq" id="WP_001982145.1">
    <property type="nucleotide sequence ID" value="NZ_CP053098.1"/>
</dbReference>
<dbReference type="SMR" id="A3M784"/>
<dbReference type="KEGG" id="acb:A1S_2359"/>
<dbReference type="HOGENOM" id="CLU_034315_2_1_6"/>
<dbReference type="UniPathway" id="UPA00035">
    <property type="reaction ID" value="UER00041"/>
</dbReference>
<dbReference type="GO" id="GO:0005829">
    <property type="term" value="C:cytosol"/>
    <property type="evidence" value="ECO:0007669"/>
    <property type="project" value="TreeGrafter"/>
</dbReference>
<dbReference type="GO" id="GO:0004048">
    <property type="term" value="F:anthranilate phosphoribosyltransferase activity"/>
    <property type="evidence" value="ECO:0007669"/>
    <property type="project" value="UniProtKB-UniRule"/>
</dbReference>
<dbReference type="GO" id="GO:0000287">
    <property type="term" value="F:magnesium ion binding"/>
    <property type="evidence" value="ECO:0007669"/>
    <property type="project" value="UniProtKB-UniRule"/>
</dbReference>
<dbReference type="GO" id="GO:0000162">
    <property type="term" value="P:L-tryptophan biosynthetic process"/>
    <property type="evidence" value="ECO:0007669"/>
    <property type="project" value="UniProtKB-UniRule"/>
</dbReference>
<dbReference type="FunFam" id="1.20.970.10:FF:000006">
    <property type="entry name" value="Anthranilate phosphoribosyltransferase"/>
    <property type="match status" value="1"/>
</dbReference>
<dbReference type="FunFam" id="3.40.1030.10:FF:000002">
    <property type="entry name" value="Anthranilate phosphoribosyltransferase"/>
    <property type="match status" value="1"/>
</dbReference>
<dbReference type="Gene3D" id="3.40.1030.10">
    <property type="entry name" value="Nucleoside phosphorylase/phosphoribosyltransferase catalytic domain"/>
    <property type="match status" value="1"/>
</dbReference>
<dbReference type="Gene3D" id="1.20.970.10">
    <property type="entry name" value="Transferase, Pyrimidine Nucleoside Phosphorylase, Chain C"/>
    <property type="match status" value="1"/>
</dbReference>
<dbReference type="HAMAP" id="MF_00211">
    <property type="entry name" value="TrpD"/>
    <property type="match status" value="1"/>
</dbReference>
<dbReference type="InterPro" id="IPR005940">
    <property type="entry name" value="Anthranilate_Pribosyl_Tfrase"/>
</dbReference>
<dbReference type="InterPro" id="IPR000312">
    <property type="entry name" value="Glycosyl_Trfase_fam3"/>
</dbReference>
<dbReference type="InterPro" id="IPR017459">
    <property type="entry name" value="Glycosyl_Trfase_fam3_N_dom"/>
</dbReference>
<dbReference type="InterPro" id="IPR036320">
    <property type="entry name" value="Glycosyl_Trfase_fam3_N_dom_sf"/>
</dbReference>
<dbReference type="InterPro" id="IPR035902">
    <property type="entry name" value="Nuc_phospho_transferase"/>
</dbReference>
<dbReference type="NCBIfam" id="TIGR01245">
    <property type="entry name" value="trpD"/>
    <property type="match status" value="1"/>
</dbReference>
<dbReference type="PANTHER" id="PTHR43285">
    <property type="entry name" value="ANTHRANILATE PHOSPHORIBOSYLTRANSFERASE"/>
    <property type="match status" value="1"/>
</dbReference>
<dbReference type="PANTHER" id="PTHR43285:SF2">
    <property type="entry name" value="ANTHRANILATE PHOSPHORIBOSYLTRANSFERASE"/>
    <property type="match status" value="1"/>
</dbReference>
<dbReference type="Pfam" id="PF02885">
    <property type="entry name" value="Glycos_trans_3N"/>
    <property type="match status" value="1"/>
</dbReference>
<dbReference type="Pfam" id="PF00591">
    <property type="entry name" value="Glycos_transf_3"/>
    <property type="match status" value="1"/>
</dbReference>
<dbReference type="SUPFAM" id="SSF52418">
    <property type="entry name" value="Nucleoside phosphorylase/phosphoribosyltransferase catalytic domain"/>
    <property type="match status" value="1"/>
</dbReference>
<dbReference type="SUPFAM" id="SSF47648">
    <property type="entry name" value="Nucleoside phosphorylase/phosphoribosyltransferase N-terminal domain"/>
    <property type="match status" value="1"/>
</dbReference>
<comment type="function">
    <text evidence="1">Catalyzes the transfer of the phosphoribosyl group of 5-phosphorylribose-1-pyrophosphate (PRPP) to anthranilate to yield N-(5'-phosphoribosyl)-anthranilate (PRA).</text>
</comment>
<comment type="catalytic activity">
    <reaction evidence="1">
        <text>N-(5-phospho-beta-D-ribosyl)anthranilate + diphosphate = 5-phospho-alpha-D-ribose 1-diphosphate + anthranilate</text>
        <dbReference type="Rhea" id="RHEA:11768"/>
        <dbReference type="ChEBI" id="CHEBI:16567"/>
        <dbReference type="ChEBI" id="CHEBI:18277"/>
        <dbReference type="ChEBI" id="CHEBI:33019"/>
        <dbReference type="ChEBI" id="CHEBI:58017"/>
        <dbReference type="EC" id="2.4.2.18"/>
    </reaction>
</comment>
<comment type="cofactor">
    <cofactor evidence="1">
        <name>Mg(2+)</name>
        <dbReference type="ChEBI" id="CHEBI:18420"/>
    </cofactor>
    <text evidence="1">Binds 2 magnesium ions per monomer.</text>
</comment>
<comment type="pathway">
    <text evidence="1">Amino-acid biosynthesis; L-tryptophan biosynthesis; L-tryptophan from chorismate: step 2/5.</text>
</comment>
<comment type="subunit">
    <text evidence="1">Homodimer.</text>
</comment>
<comment type="similarity">
    <text evidence="1">Belongs to the anthranilate phosphoribosyltransferase family.</text>
</comment>
<organism>
    <name type="scientific">Acinetobacter baumannii (strain ATCC 17978 / DSM 105126 / CIP 53.77 / LMG 1025 / NCDC KC755 / 5377)</name>
    <dbReference type="NCBI Taxonomy" id="400667"/>
    <lineage>
        <taxon>Bacteria</taxon>
        <taxon>Pseudomonadati</taxon>
        <taxon>Pseudomonadota</taxon>
        <taxon>Gammaproteobacteria</taxon>
        <taxon>Moraxellales</taxon>
        <taxon>Moraxellaceae</taxon>
        <taxon>Acinetobacter</taxon>
        <taxon>Acinetobacter calcoaceticus/baumannii complex</taxon>
    </lineage>
</organism>
<reference key="1">
    <citation type="journal article" date="2007" name="Genes Dev.">
        <title>New insights into Acinetobacter baumannii pathogenesis revealed by high-density pyrosequencing and transposon mutagenesis.</title>
        <authorList>
            <person name="Smith M.G."/>
            <person name="Gianoulis T.A."/>
            <person name="Pukatzki S."/>
            <person name="Mekalanos J.J."/>
            <person name="Ornston L.N."/>
            <person name="Gerstein M."/>
            <person name="Snyder M."/>
        </authorList>
    </citation>
    <scope>NUCLEOTIDE SEQUENCE [LARGE SCALE GENOMIC DNA]</scope>
    <source>
        <strain>ATCC 17978 / DSM 105126 / CIP 53.77 / LMG 1025 / NCDC KC755 / 5377</strain>
    </source>
</reference>
<keyword id="KW-0028">Amino-acid biosynthesis</keyword>
<keyword id="KW-0057">Aromatic amino acid biosynthesis</keyword>
<keyword id="KW-0328">Glycosyltransferase</keyword>
<keyword id="KW-0460">Magnesium</keyword>
<keyword id="KW-0479">Metal-binding</keyword>
<keyword id="KW-0808">Transferase</keyword>
<keyword id="KW-0822">Tryptophan biosynthesis</keyword>
<proteinExistence type="inferred from homology"/>
<feature type="chain" id="PRO_1000099772" description="Anthranilate phosphoribosyltransferase">
    <location>
        <begin position="1"/>
        <end position="349"/>
    </location>
</feature>
<feature type="binding site" evidence="1">
    <location>
        <position position="82"/>
    </location>
    <ligand>
        <name>5-phospho-alpha-D-ribose 1-diphosphate</name>
        <dbReference type="ChEBI" id="CHEBI:58017"/>
    </ligand>
</feature>
<feature type="binding site" evidence="1">
    <location>
        <position position="82"/>
    </location>
    <ligand>
        <name>anthranilate</name>
        <dbReference type="ChEBI" id="CHEBI:16567"/>
        <label>1</label>
    </ligand>
</feature>
<feature type="binding site" evidence="1">
    <location>
        <begin position="85"/>
        <end position="86"/>
    </location>
    <ligand>
        <name>5-phospho-alpha-D-ribose 1-diphosphate</name>
        <dbReference type="ChEBI" id="CHEBI:58017"/>
    </ligand>
</feature>
<feature type="binding site" evidence="1">
    <location>
        <begin position="92"/>
        <end position="95"/>
    </location>
    <ligand>
        <name>5-phospho-alpha-D-ribose 1-diphosphate</name>
        <dbReference type="ChEBI" id="CHEBI:58017"/>
    </ligand>
</feature>
<feature type="binding site" evidence="1">
    <location>
        <position position="94"/>
    </location>
    <ligand>
        <name>Mg(2+)</name>
        <dbReference type="ChEBI" id="CHEBI:18420"/>
        <label>1</label>
    </ligand>
</feature>
<feature type="binding site" evidence="1">
    <location>
        <begin position="110"/>
        <end position="118"/>
    </location>
    <ligand>
        <name>5-phospho-alpha-D-ribose 1-diphosphate</name>
        <dbReference type="ChEBI" id="CHEBI:58017"/>
    </ligand>
</feature>
<feature type="binding site" evidence="1">
    <location>
        <position position="113"/>
    </location>
    <ligand>
        <name>anthranilate</name>
        <dbReference type="ChEBI" id="CHEBI:16567"/>
        <label>1</label>
    </ligand>
</feature>
<feature type="binding site" evidence="1">
    <location>
        <position position="122"/>
    </location>
    <ligand>
        <name>5-phospho-alpha-D-ribose 1-diphosphate</name>
        <dbReference type="ChEBI" id="CHEBI:58017"/>
    </ligand>
</feature>
<feature type="binding site" evidence="1">
    <location>
        <position position="168"/>
    </location>
    <ligand>
        <name>anthranilate</name>
        <dbReference type="ChEBI" id="CHEBI:16567"/>
        <label>2</label>
    </ligand>
</feature>
<feature type="binding site" evidence="1">
    <location>
        <position position="227"/>
    </location>
    <ligand>
        <name>Mg(2+)</name>
        <dbReference type="ChEBI" id="CHEBI:18420"/>
        <label>2</label>
    </ligand>
</feature>
<feature type="binding site" evidence="1">
    <location>
        <position position="228"/>
    </location>
    <ligand>
        <name>Mg(2+)</name>
        <dbReference type="ChEBI" id="CHEBI:18420"/>
        <label>1</label>
    </ligand>
</feature>
<feature type="binding site" evidence="1">
    <location>
        <position position="228"/>
    </location>
    <ligand>
        <name>Mg(2+)</name>
        <dbReference type="ChEBI" id="CHEBI:18420"/>
        <label>2</label>
    </ligand>
</feature>
<evidence type="ECO:0000255" key="1">
    <source>
        <dbReference type="HAMAP-Rule" id="MF_00211"/>
    </source>
</evidence>
<protein>
    <recommendedName>
        <fullName evidence="1">Anthranilate phosphoribosyltransferase</fullName>
        <ecNumber evidence="1">2.4.2.18</ecNumber>
    </recommendedName>
</protein>
<gene>
    <name evidence="1" type="primary">trpD</name>
    <name type="ordered locus">A1S_2359</name>
</gene>
<name>TRPD_ACIBT</name>
<sequence length="349" mass="37403">MNIQQALNHITKNIHLTQPQMEEIMRSIMQGEATEAQIGALMMGLRMKGESIDEMTAAARVMREFAIKIDVSDIKHLVDIVGTGGDGQNLFNVSTASSFVIAAAGATIAKHGNRGVSSKSGSSDLLEQAGIHLDLDMQQTERCIREMGVGFLFAPNHHKAMKYAAGPRRELGIRSIFNLLGPLTNPAGVKRFVIGVFSDELCRPIAEVMKQLGAEHVMVVHSKDGLDEISLAAPTTIAELKDGEITEWTLNPEDVGIESQTLNGLVVADATASLKLIKDALSKNKSDIGEKAANMIALNAGAGIYVAGITKTYAQAVAFAQDIIYGGQALEKMSVLAEFTKTLKQSQAD</sequence>
<accession>A3M784</accession>